<protein>
    <recommendedName>
        <fullName evidence="12">Centrosomal protein of 63 kDa</fullName>
        <shortName>Cep63</shortName>
    </recommendedName>
</protein>
<feature type="chain" id="PRO_0000089493" description="Centrosomal protein of 63 kDa">
    <location>
        <begin position="1"/>
        <end position="703"/>
    </location>
</feature>
<feature type="coiled-coil region" evidence="1">
    <location>
        <begin position="22"/>
        <end position="199"/>
    </location>
</feature>
<feature type="coiled-coil region" evidence="1">
    <location>
        <begin position="242"/>
        <end position="306"/>
    </location>
</feature>
<feature type="coiled-coil region" evidence="1">
    <location>
        <begin position="353"/>
        <end position="533"/>
    </location>
</feature>
<feature type="coiled-coil region" evidence="1">
    <location>
        <begin position="676"/>
        <end position="703"/>
    </location>
</feature>
<feature type="modified residue" description="N-acetylmethionine" evidence="14">
    <location>
        <position position="1"/>
    </location>
</feature>
<feature type="modified residue" description="Phosphoserine" evidence="15">
    <location>
        <position position="278"/>
    </location>
</feature>
<feature type="splice variant" id="VSP_012251" description="In isoform 3 and isoform 4." evidence="10 11">
    <location>
        <begin position="310"/>
        <end position="355"/>
    </location>
</feature>
<feature type="splice variant" id="VSP_012252" description="In isoform 2 and isoform 3." evidence="10 11">
    <location>
        <begin position="490"/>
        <end position="651"/>
    </location>
</feature>
<feature type="splice variant" id="VSP_012253" description="In isoform 4." evidence="10">
    <original>AKEISLADLQENYIEALNKLVSENQQLQKDLM</original>
    <variation>RWGFTMLSSLVLNFGIQAIRQPQRPKVLELQV</variation>
    <location>
        <begin position="490"/>
        <end position="521"/>
    </location>
</feature>
<feature type="splice variant" id="VSP_012254" description="In isoform 4." evidence="10">
    <location>
        <begin position="522"/>
        <end position="703"/>
    </location>
</feature>
<feature type="sequence variant" id="VAR_020604" description="In dbSNP:rs1127826.">
    <original>S</original>
    <variation>L</variation>
    <location>
        <position position="651"/>
    </location>
</feature>
<feature type="sequence conflict" description="In Ref. 1; BAB14662." evidence="12" ref="1">
    <original>K</original>
    <variation>R</variation>
    <location>
        <position position="365"/>
    </location>
</feature>
<feature type="helix" evidence="17">
    <location>
        <begin position="440"/>
        <end position="484"/>
    </location>
</feature>
<feature type="helix" evidence="16">
    <location>
        <begin position="664"/>
        <end position="701"/>
    </location>
</feature>
<comment type="function">
    <text evidence="3 4 6 8 9">Required for normal spindle assembly (PubMed:21406398, PubMed:21983783, PubMed:26297806, PubMed:35793002). Plays a key role in mother-centriole-dependent centriole duplication; the function seems also to involve CEP152, CDK5RAP2 and WDR62 through a stepwise assembled complex at the centrosome that recruits CDK2 required for centriole duplication (PubMed:21983783, PubMed:26297806). Reported to be required for centrosomal recruitment of CEP152; however, this function has been questioned (PubMed:21983783, PubMed:26297806). Also recruits CDK1 to centrosomes (PubMed:21406398). Plays a role in DNA damage response (PubMed:21406398). Following DNA damage, such as double-strand breaks (DSBs), is removed from centrosomes; this leads to the inactivation of spindle assembly and delay in mitotic progression (PubMed:21406398). Promotes stabilization of FXR1 protein by inhibiting FXR1 ubiquitination (PubMed:35989368).</text>
</comment>
<comment type="subunit">
    <text evidence="3 4 6 7 9">Interacts with CEP152 and CDK1; these interactions recruit both ligands to centrosomes (PubMed:21406398). Interacts with CDK2, CDK5RAP2, WDR62, CEP90, KIAA0753/moonraker and CCDC14 (PubMed:21406398, PubMed:26297806). CEP63, CDK5RAP2, CEP152, WDR62 are proposed to form a stepwise assembled complex at the centrosome forming a ring near parental centrioles (PubMed:21406398, PubMed:21983783, PubMed:26297806). Interacts with CCDC57; the interaction is required for their location to proximal end of centrioles (PubMed:32402286). Interacts with FXR1; promoting its stabilization (PubMed:35989368).</text>
</comment>
<comment type="subunit">
    <text evidence="8">(Microbial infection) Interacts with zika virus serine protease NS3; this interaction disorganizes the centrosome.</text>
</comment>
<comment type="interaction">
    <interactant intactId="EBI-741977">
        <id>Q96MT8</id>
    </interactant>
    <interactant intactId="EBI-79934">
        <id>P09917</id>
        <label>ALOX5</label>
    </interactant>
    <organismsDiffer>false</organismsDiffer>
    <experiments>4</experiments>
</comment>
<comment type="interaction">
    <interactant intactId="EBI-741977">
        <id>Q96MT8</id>
    </interactant>
    <interactant intactId="EBI-638194">
        <id>P53365</id>
        <label>ARFIP2</label>
    </interactant>
    <organismsDiffer>false</organismsDiffer>
    <experiments>3</experiments>
</comment>
<comment type="interaction">
    <interactant intactId="EBI-741977">
        <id>Q96MT8</id>
    </interactant>
    <interactant intactId="EBI-751035">
        <id>Q49A88</id>
        <label>CCDC14</label>
    </interactant>
    <organismsDiffer>false</organismsDiffer>
    <experiments>5</experiments>
</comment>
<comment type="interaction">
    <interactant intactId="EBI-741977">
        <id>Q96MT8</id>
    </interactant>
    <interactant intactId="EBI-308614">
        <id>Q86XR8</id>
        <label>CEP57</label>
    </interactant>
    <organismsDiffer>false</organismsDiffer>
    <experiments>5</experiments>
</comment>
<comment type="interaction">
    <interactant intactId="EBI-741977">
        <id>Q96MT8</id>
    </interactant>
    <interactant intactId="EBI-1104570">
        <id>Q8IYX8</id>
        <label>CEP57L1</label>
    </interactant>
    <organismsDiffer>false</organismsDiffer>
    <experiments>3</experiments>
</comment>
<comment type="interaction">
    <interactant intactId="EBI-741977">
        <id>Q96MT8</id>
    </interactant>
    <interactant intactId="EBI-10181988">
        <id>Q8IYX8-2</id>
        <label>CEP57L1</label>
    </interactant>
    <organismsDiffer>false</organismsDiffer>
    <experiments>3</experiments>
</comment>
<comment type="interaction">
    <interactant intactId="EBI-741977">
        <id>Q96MT8</id>
    </interactant>
    <interactant intactId="EBI-529989">
        <id>Q9NRI5</id>
        <label>DISC1</label>
    </interactant>
    <organismsDiffer>false</organismsDiffer>
    <experiments>7</experiments>
</comment>
<comment type="interaction">
    <interactant intactId="EBI-741977">
        <id>Q96MT8</id>
    </interactant>
    <interactant intactId="EBI-740402">
        <id>O60941</id>
        <label>DTNB</label>
    </interactant>
    <organismsDiffer>false</organismsDiffer>
    <experiments>5</experiments>
</comment>
<comment type="interaction">
    <interactant intactId="EBI-741977">
        <id>Q96MT8</id>
    </interactant>
    <interactant intactId="EBI-948630">
        <id>Q86Y13</id>
        <label>DZIP3</label>
    </interactant>
    <organismsDiffer>false</organismsDiffer>
    <experiments>3</experiments>
</comment>
<comment type="interaction">
    <interactant intactId="EBI-741977">
        <id>Q96MT8</id>
    </interactant>
    <interactant intactId="EBI-530054">
        <id>Q15910</id>
        <label>EZH2</label>
    </interactant>
    <organismsDiffer>false</organismsDiffer>
    <experiments>4</experiments>
</comment>
<comment type="interaction">
    <interactant intactId="EBI-741977">
        <id>Q96MT8</id>
    </interactant>
    <interactant intactId="EBI-719941">
        <id>Q3B820</id>
        <label>FAM161A</label>
    </interactant>
    <organismsDiffer>false</organismsDiffer>
    <experiments>3</experiments>
</comment>
<comment type="interaction">
    <interactant intactId="EBI-741977">
        <id>Q96MT8</id>
    </interactant>
    <interactant intactId="EBI-10244131">
        <id>Q8TES7-6</id>
        <label>FBF1</label>
    </interactant>
    <organismsDiffer>false</organismsDiffer>
    <experiments>3</experiments>
</comment>
<comment type="interaction">
    <interactant intactId="EBI-741977">
        <id>Q96MT8</id>
    </interactant>
    <interactant intactId="EBI-2514791">
        <id>Q96CS2</id>
        <label>HAUS1</label>
    </interactant>
    <organismsDiffer>false</organismsDiffer>
    <experiments>4</experiments>
</comment>
<comment type="interaction">
    <interactant intactId="EBI-741977">
        <id>Q96MT8</id>
    </interactant>
    <interactant intactId="EBI-78579">
        <id>P06748</id>
        <label>NPM1</label>
    </interactant>
    <organismsDiffer>false</organismsDiffer>
    <experiments>2</experiments>
</comment>
<comment type="interaction">
    <interactant intactId="EBI-741977">
        <id>Q96MT8</id>
    </interactant>
    <interactant intactId="EBI-1210753">
        <id>Q7Z417</id>
        <label>NUFIP2</label>
    </interactant>
    <organismsDiffer>false</organismsDiffer>
    <experiments>3</experiments>
</comment>
<comment type="interaction">
    <interactant intactId="EBI-741977">
        <id>Q96MT8</id>
    </interactant>
    <interactant intactId="EBI-752122">
        <id>Q9NPJ8</id>
        <label>NXT2</label>
    </interactant>
    <organismsDiffer>false</organismsDiffer>
    <experiments>3</experiments>
</comment>
<comment type="interaction">
    <interactant intactId="EBI-741977">
        <id>Q96MT8</id>
    </interactant>
    <interactant intactId="EBI-2558770">
        <id>Q8WXW3</id>
        <label>PIBF1</label>
    </interactant>
    <organismsDiffer>false</organismsDiffer>
    <experiments>7</experiments>
</comment>
<comment type="interaction">
    <interactant intactId="EBI-741977">
        <id>Q96MT8</id>
    </interactant>
    <interactant intactId="EBI-10297880">
        <id>Q9BT08</id>
        <label>POLR3C</label>
    </interactant>
    <organismsDiffer>false</organismsDiffer>
    <experiments>3</experiments>
</comment>
<comment type="interaction">
    <interactant intactId="EBI-741977">
        <id>Q96MT8</id>
    </interactant>
    <interactant intactId="EBI-455078">
        <id>Q969G3</id>
        <label>SMARCE1</label>
    </interactant>
    <organismsDiffer>false</organismsDiffer>
    <experiments>4</experiments>
</comment>
<comment type="interaction">
    <interactant intactId="EBI-741977">
        <id>Q96MT8</id>
    </interactant>
    <interactant intactId="EBI-1049228">
        <id>P08621</id>
        <label>SNRNP70</label>
    </interactant>
    <organismsDiffer>false</organismsDiffer>
    <experiments>3</experiments>
</comment>
<comment type="interaction">
    <interactant intactId="EBI-741977">
        <id>Q96MT8</id>
    </interactant>
    <interactant intactId="EBI-10295431">
        <id>Q99909</id>
        <label>SSX3</label>
    </interactant>
    <organismsDiffer>false</organismsDiffer>
    <experiments>4</experiments>
</comment>
<comment type="interaction">
    <interactant intactId="EBI-741977">
        <id>Q96MT8</id>
    </interactant>
    <interactant intactId="EBI-745392">
        <id>Q9BSW7</id>
        <label>SYT17</label>
    </interactant>
    <organismsDiffer>false</organismsDiffer>
    <experiments>3</experiments>
</comment>
<comment type="interaction">
    <interactant intactId="EBI-741977">
        <id>Q96MT8</id>
    </interactant>
    <interactant intactId="EBI-356349">
        <id>Q92844</id>
        <label>TANK</label>
    </interactant>
    <organismsDiffer>false</organismsDiffer>
    <experiments>4</experiments>
</comment>
<comment type="interaction">
    <interactant intactId="EBI-741977">
        <id>Q96MT8</id>
    </interactant>
    <interactant intactId="EBI-1048247">
        <id>Q8TC07</id>
        <label>TBC1D15</label>
    </interactant>
    <organismsDiffer>false</organismsDiffer>
    <experiments>5</experiments>
</comment>
<comment type="interaction">
    <interactant intactId="EBI-741977">
        <id>Q96MT8</id>
    </interactant>
    <interactant intactId="EBI-9053916">
        <id>Q63HK5</id>
        <label>TSHZ3</label>
    </interactant>
    <organismsDiffer>false</organismsDiffer>
    <experiments>3</experiments>
</comment>
<comment type="interaction">
    <interactant intactId="EBI-741977">
        <id>Q96MT8</id>
    </interactant>
    <interactant intactId="EBI-359793">
        <id>P40222</id>
        <label>TXLNA</label>
    </interactant>
    <organismsDiffer>false</organismsDiffer>
    <experiments>4</experiments>
</comment>
<comment type="interaction">
    <interactant intactId="EBI-741977">
        <id>Q96MT8</id>
    </interactant>
    <interactant intactId="EBI-6116822">
        <id>Q8N3L3</id>
        <label>TXLNB</label>
    </interactant>
    <organismsDiffer>false</organismsDiffer>
    <experiments>4</experiments>
</comment>
<comment type="interaction">
    <interactant intactId="EBI-741977">
        <id>Q96MT8</id>
    </interactant>
    <interactant intactId="EBI-597063">
        <id>Q8TBK6</id>
        <label>ZCCHC10</label>
    </interactant>
    <organismsDiffer>false</organismsDiffer>
    <experiments>3</experiments>
</comment>
<comment type="interaction">
    <interactant intactId="EBI-741977">
        <id>Q96MT8</id>
    </interactant>
    <interactant intactId="EBI-2554268">
        <id>A2AUM9</id>
        <label>Cep152</label>
    </interactant>
    <organismsDiffer>true</organismsDiffer>
    <experiments>3</experiments>
</comment>
<comment type="interaction">
    <interactant intactId="EBI-741977">
        <id>Q96MT8</id>
    </interactant>
    <interactant intactId="EBI-9676218">
        <id>P03410</id>
        <label>tax</label>
    </interactant>
    <organismsDiffer>true</organismsDiffer>
    <experiments>4</experiments>
</comment>
<comment type="interaction">
    <interactant intactId="EBI-741977">
        <id>Q96MT8</id>
    </interactant>
    <interactant intactId="EBI-9675698">
        <id>P14079</id>
        <label>tax</label>
    </interactant>
    <organismsDiffer>true</organismsDiffer>
    <experiments>5</experiments>
</comment>
<comment type="interaction">
    <interactant intactId="EBI-11522539">
        <id>Q96MT8-3</id>
    </interactant>
    <interactant intactId="EBI-79934">
        <id>P09917</id>
        <label>ALOX5</label>
    </interactant>
    <organismsDiffer>false</organismsDiffer>
    <experiments>8</experiments>
</comment>
<comment type="interaction">
    <interactant intactId="EBI-11522539">
        <id>Q96MT8-3</id>
    </interactant>
    <interactant intactId="EBI-10229433">
        <id>Q13515</id>
        <label>BFSP2</label>
    </interactant>
    <organismsDiffer>false</organismsDiffer>
    <experiments>3</experiments>
</comment>
<comment type="interaction">
    <interactant intactId="EBI-11522539">
        <id>Q96MT8-3</id>
    </interactant>
    <interactant intactId="EBI-12065306">
        <id>P55201-2</id>
        <label>BRPF1</label>
    </interactant>
    <organismsDiffer>false</organismsDiffer>
    <experiments>3</experiments>
</comment>
<comment type="interaction">
    <interactant intactId="EBI-11522539">
        <id>Q96MT8-3</id>
    </interactant>
    <interactant intactId="EBI-1765641">
        <id>Q9Y6W3</id>
        <label>CAPN7</label>
    </interactant>
    <organismsDiffer>false</organismsDiffer>
    <experiments>3</experiments>
</comment>
<comment type="interaction">
    <interactant intactId="EBI-11522539">
        <id>Q96MT8-3</id>
    </interactant>
    <interactant intactId="EBI-12105646">
        <id>Q49A88-3</id>
        <label>CCDC14</label>
    </interactant>
    <organismsDiffer>false</organismsDiffer>
    <experiments>3</experiments>
</comment>
<comment type="interaction">
    <interactant intactId="EBI-11522539">
        <id>Q96MT8-3</id>
    </interactant>
    <interactant intactId="EBI-10175300">
        <id>Q8TD31-3</id>
        <label>CCHCR1</label>
    </interactant>
    <organismsDiffer>false</organismsDiffer>
    <experiments>7</experiments>
</comment>
<comment type="interaction">
    <interactant intactId="EBI-11522539">
        <id>Q96MT8-3</id>
    </interactant>
    <interactant intactId="EBI-11752486">
        <id>Q86XR8-3</id>
        <label>CEP57</label>
    </interactant>
    <organismsDiffer>false</organismsDiffer>
    <experiments>4</experiments>
</comment>
<comment type="interaction">
    <interactant intactId="EBI-11522539">
        <id>Q96MT8-3</id>
    </interactant>
    <interactant intactId="EBI-5453285">
        <id>Q2TBE0</id>
        <label>CWF19L2</label>
    </interactant>
    <organismsDiffer>false</organismsDiffer>
    <experiments>3</experiments>
</comment>
<comment type="interaction">
    <interactant intactId="EBI-11522539">
        <id>Q96MT8-3</id>
    </interactant>
    <interactant intactId="EBI-77321">
        <id>Q9UER7</id>
        <label>DAXX</label>
    </interactant>
    <organismsDiffer>false</organismsDiffer>
    <experiments>3</experiments>
</comment>
<comment type="interaction">
    <interactant intactId="EBI-11522539">
        <id>Q96MT8-3</id>
    </interactant>
    <interactant intactId="EBI-11984733">
        <id>O60941-5</id>
        <label>DTNB</label>
    </interactant>
    <organismsDiffer>false</organismsDiffer>
    <experiments>3</experiments>
</comment>
<comment type="interaction">
    <interactant intactId="EBI-11522539">
        <id>Q96MT8-3</id>
    </interactant>
    <interactant intactId="EBI-719941">
        <id>Q3B820</id>
        <label>FAM161A</label>
    </interactant>
    <organismsDiffer>false</organismsDiffer>
    <experiments>3</experiments>
</comment>
<comment type="interaction">
    <interactant intactId="EBI-11522539">
        <id>Q96MT8-3</id>
    </interactant>
    <interactant intactId="EBI-2515330">
        <id>Q96JP0</id>
        <label>FEM1C</label>
    </interactant>
    <organismsDiffer>false</organismsDiffer>
    <experiments>3</experiments>
</comment>
<comment type="interaction">
    <interactant intactId="EBI-11522539">
        <id>Q96MT8-3</id>
    </interactant>
    <interactant intactId="EBI-740220">
        <id>O14964</id>
        <label>HGS</label>
    </interactant>
    <organismsDiffer>false</organismsDiffer>
    <experiments>6</experiments>
</comment>
<comment type="interaction">
    <interactant intactId="EBI-11522539">
        <id>Q96MT8-3</id>
    </interactant>
    <interactant intactId="EBI-466029">
        <id>P42858</id>
        <label>HTT</label>
    </interactant>
    <organismsDiffer>false</organismsDiffer>
    <experiments>12</experiments>
</comment>
<comment type="interaction">
    <interactant intactId="EBI-11522539">
        <id>Q96MT8-3</id>
    </interactant>
    <interactant intactId="EBI-2556193">
        <id>Q63ZY3</id>
        <label>KANK2</label>
    </interactant>
    <organismsDiffer>false</organismsDiffer>
    <experiments>3</experiments>
</comment>
<comment type="interaction">
    <interactant intactId="EBI-11522539">
        <id>Q96MT8-3</id>
    </interactant>
    <interactant intactId="EBI-14086479">
        <id>Q8IVT4</id>
        <label>MGC50722</label>
    </interactant>
    <organismsDiffer>false</organismsDiffer>
    <experiments>3</experiments>
</comment>
<comment type="interaction">
    <interactant intactId="EBI-11522539">
        <id>Q96MT8-3</id>
    </interactant>
    <interactant intactId="EBI-743811">
        <id>Q8NEH6</id>
        <label>MNS1</label>
    </interactant>
    <organismsDiffer>false</organismsDiffer>
    <experiments>3</experiments>
</comment>
<comment type="interaction">
    <interactant intactId="EBI-11522539">
        <id>Q96MT8-3</id>
    </interactant>
    <interactant intactId="EBI-715849">
        <id>O14777</id>
        <label>NDC80</label>
    </interactant>
    <organismsDiffer>false</organismsDiffer>
    <experiments>3</experiments>
</comment>
<comment type="interaction">
    <interactant intactId="EBI-11522539">
        <id>Q96MT8-3</id>
    </interactant>
    <interactant intactId="EBI-14066006">
        <id>Q4G0R1</id>
        <label>PIBF1</label>
    </interactant>
    <organismsDiffer>false</organismsDiffer>
    <experiments>3</experiments>
</comment>
<comment type="interaction">
    <interactant intactId="EBI-11522539">
        <id>Q96MT8-3</id>
    </interactant>
    <interactant intactId="EBI-5452779">
        <id>Q9BUI4</id>
        <label>POLR3C</label>
    </interactant>
    <organismsDiffer>false</organismsDiffer>
    <experiments>5</experiments>
</comment>
<comment type="interaction">
    <interactant intactId="EBI-11522539">
        <id>Q96MT8-3</id>
    </interactant>
    <interactant intactId="EBI-1504830">
        <id>Q9P2K3-2</id>
        <label>RCOR3</label>
    </interactant>
    <organismsDiffer>false</organismsDiffer>
    <experiments>3</experiments>
</comment>
<comment type="interaction">
    <interactant intactId="EBI-11522539">
        <id>Q96MT8-3</id>
    </interactant>
    <interactant intactId="EBI-713255">
        <id>Q9GZN7</id>
        <label>ROGDI</label>
    </interactant>
    <organismsDiffer>false</organismsDiffer>
    <experiments>3</experiments>
</comment>
<comment type="interaction">
    <interactant intactId="EBI-11522539">
        <id>Q96MT8-3</id>
    </interactant>
    <interactant intactId="EBI-455078">
        <id>Q969G3</id>
        <label>SMARCE1</label>
    </interactant>
    <organismsDiffer>false</organismsDiffer>
    <experiments>3</experiments>
</comment>
<comment type="interaction">
    <interactant intactId="EBI-11522539">
        <id>Q96MT8-3</id>
    </interactant>
    <interactant intactId="EBI-1048247">
        <id>Q8TC07</id>
        <label>TBC1D15</label>
    </interactant>
    <organismsDiffer>false</organismsDiffer>
    <experiments>3</experiments>
</comment>
<comment type="interaction">
    <interactant intactId="EBI-11522539">
        <id>Q96MT8-3</id>
    </interactant>
    <interactant intactId="EBI-8787464">
        <id>Q9NU19</id>
        <label>TBC1D22B</label>
    </interactant>
    <organismsDiffer>false</organismsDiffer>
    <experiments>3</experiments>
</comment>
<comment type="interaction">
    <interactant intactId="EBI-11522539">
        <id>Q96MT8-3</id>
    </interactant>
    <interactant intactId="EBI-346882">
        <id>Q99816</id>
        <label>TSG101</label>
    </interactant>
    <organismsDiffer>false</organismsDiffer>
    <experiments>3</experiments>
</comment>
<comment type="interaction">
    <interactant intactId="EBI-11522539">
        <id>Q96MT8-3</id>
    </interactant>
    <interactant intactId="EBI-10241197">
        <id>Q3SY00</id>
        <label>TSGA10IP</label>
    </interactant>
    <organismsDiffer>false</organismsDiffer>
    <experiments>3</experiments>
</comment>
<comment type="interaction">
    <interactant intactId="EBI-11522539">
        <id>Q96MT8-3</id>
    </interactant>
    <interactant intactId="EBI-6116822">
        <id>Q8N3L3</id>
        <label>TXLNB</label>
    </interactant>
    <organismsDiffer>false</organismsDiffer>
    <experiments>3</experiments>
</comment>
<comment type="interaction">
    <interactant intactId="EBI-11522539">
        <id>Q96MT8-3</id>
    </interactant>
    <interactant intactId="EBI-739895">
        <id>Q8N6Y0</id>
        <label>USHBP1</label>
    </interactant>
    <organismsDiffer>false</organismsDiffer>
    <experiments>5</experiments>
</comment>
<comment type="interaction">
    <interactant intactId="EBI-11522539">
        <id>Q96MT8-3</id>
    </interactant>
    <interactant intactId="EBI-743272">
        <id>O75604</id>
        <label>USP2</label>
    </interactant>
    <organismsDiffer>false</organismsDiffer>
    <experiments>3</experiments>
</comment>
<comment type="interaction">
    <interactant intactId="EBI-11522539">
        <id>Q96MT8-3</id>
    </interactant>
    <interactant intactId="EBI-11742222">
        <id>Q9UQR1-2</id>
        <label>ZNF148</label>
    </interactant>
    <organismsDiffer>false</organismsDiffer>
    <experiments>3</experiments>
</comment>
<comment type="interaction">
    <interactant intactId="EBI-11522539">
        <id>Q96MT8-3</id>
    </interactant>
    <interactant intactId="EBI-10177272">
        <id>P15622-3</id>
        <label>ZNF250</label>
    </interactant>
    <organismsDiffer>false</organismsDiffer>
    <experiments>3</experiments>
</comment>
<comment type="interaction">
    <interactant intactId="EBI-11522539">
        <id>Q96MT8-3</id>
    </interactant>
    <interactant intactId="EBI-10251462">
        <id>Q6NX45</id>
        <label>ZNF774</label>
    </interactant>
    <organismsDiffer>false</organismsDiffer>
    <experiments>3</experiments>
</comment>
<comment type="subcellular location">
    <subcellularLocation>
        <location evidence="2 6 7 8">Cytoplasm</location>
        <location evidence="2 6 7 8">Cytoskeleton</location>
        <location evidence="2 6 7 8">Microtubule organizing center</location>
        <location evidence="2 6 7 8">Centrosome</location>
    </subcellularLocation>
    <subcellularLocation>
        <location evidence="4 6 7">Cytoplasm</location>
        <location evidence="4 6 7">Cytoskeleton</location>
        <location evidence="4 6 7">Microtubule organizing center</location>
        <location evidence="4 6 7">Centrosome</location>
        <location evidence="4 6 7">Centriole</location>
    </subcellularLocation>
    <subcellularLocation>
        <location evidence="5 7">Cytoplasm</location>
        <location evidence="5 7">Cytoskeleton</location>
        <location evidence="5 7">Microtubule organizing center</location>
        <location evidence="5 7">Centrosome</location>
        <location evidence="5 7">Centriolar satellite</location>
    </subcellularLocation>
    <text evidence="4 6 7">Colocalizes with CDK5RAP2, CEP152 and WDR62 in a discrete ring around the proximal end of the parental centriole. At this site, a cohesive structure is predicted to engage parental centrioles and procentrioles.</text>
</comment>
<comment type="alternative products">
    <event type="alternative splicing"/>
    <isoform>
        <id>Q96MT8-1</id>
        <name>1</name>
        <sequence type="displayed"/>
    </isoform>
    <isoform>
        <id>Q96MT8-2</id>
        <name>2</name>
        <sequence type="described" ref="VSP_012252"/>
    </isoform>
    <isoform>
        <id>Q96MT8-3</id>
        <name>3</name>
        <sequence type="described" ref="VSP_012251 VSP_012252"/>
    </isoform>
    <isoform>
        <id>Q96MT8-4</id>
        <name>4</name>
        <sequence type="described" ref="VSP_012251 VSP_012253 VSP_012254"/>
    </isoform>
</comment>
<comment type="PTM">
    <text evidence="9">Polyubiquitinated via 'Lys-48'-linked ubiquitin, leading to its degradation (PubMed:35989368). Deubiquitinated by USP36, promoting its stabilization (PubMed:35989368).</text>
</comment>
<comment type="disease" evidence="4">
    <disease id="DI-03484">
        <name>Seckel syndrome 6</name>
        <acronym>SCKL6</acronym>
        <description>A rare autosomal recessive disorder characterized by proportionate dwarfism of prenatal onset associated with low birth weight, growth retardation, severe microcephaly with a bird-headed like appearance, and intellectual disability.</description>
        <dbReference type="MIM" id="614728"/>
    </disease>
    <text>The disease is caused by variants affecting the gene represented in this entry.</text>
</comment>
<comment type="miscellaneous">
    <text>CEP63 and DEUP1 paralogs are both involved in centriole amplification: while CEP63 mediates mother-centriole-dependent centriole duplication, DEUP1 mediates de novo centriole amplification in multiciliated cells.</text>
</comment>
<comment type="similarity">
    <text evidence="12">Belongs to the CEP63 family.</text>
</comment>
<keyword id="KW-0002">3D-structure</keyword>
<keyword id="KW-0007">Acetylation</keyword>
<keyword id="KW-0025">Alternative splicing</keyword>
<keyword id="KW-0131">Cell cycle</keyword>
<keyword id="KW-0132">Cell division</keyword>
<keyword id="KW-0175">Coiled coil</keyword>
<keyword id="KW-0963">Cytoplasm</keyword>
<keyword id="KW-0206">Cytoskeleton</keyword>
<keyword id="KW-0227">DNA damage</keyword>
<keyword id="KW-0242">Dwarfism</keyword>
<keyword id="KW-0945">Host-virus interaction</keyword>
<keyword id="KW-0991">Intellectual disability</keyword>
<keyword id="KW-0498">Mitosis</keyword>
<keyword id="KW-0597">Phosphoprotein</keyword>
<keyword id="KW-1267">Proteomics identification</keyword>
<keyword id="KW-1185">Reference proteome</keyword>
<keyword id="KW-0832">Ubl conjugation</keyword>
<organism>
    <name type="scientific">Homo sapiens</name>
    <name type="common">Human</name>
    <dbReference type="NCBI Taxonomy" id="9606"/>
    <lineage>
        <taxon>Eukaryota</taxon>
        <taxon>Metazoa</taxon>
        <taxon>Chordata</taxon>
        <taxon>Craniata</taxon>
        <taxon>Vertebrata</taxon>
        <taxon>Euteleostomi</taxon>
        <taxon>Mammalia</taxon>
        <taxon>Eutheria</taxon>
        <taxon>Euarchontoglires</taxon>
        <taxon>Primates</taxon>
        <taxon>Haplorrhini</taxon>
        <taxon>Catarrhini</taxon>
        <taxon>Hominidae</taxon>
        <taxon>Homo</taxon>
    </lineage>
</organism>
<reference key="1">
    <citation type="journal article" date="2004" name="Nat. Genet.">
        <title>Complete sequencing and characterization of 21,243 full-length human cDNAs.</title>
        <authorList>
            <person name="Ota T."/>
            <person name="Suzuki Y."/>
            <person name="Nishikawa T."/>
            <person name="Otsuki T."/>
            <person name="Sugiyama T."/>
            <person name="Irie R."/>
            <person name="Wakamatsu A."/>
            <person name="Hayashi K."/>
            <person name="Sato H."/>
            <person name="Nagai K."/>
            <person name="Kimura K."/>
            <person name="Makita H."/>
            <person name="Sekine M."/>
            <person name="Obayashi M."/>
            <person name="Nishi T."/>
            <person name="Shibahara T."/>
            <person name="Tanaka T."/>
            <person name="Ishii S."/>
            <person name="Yamamoto J."/>
            <person name="Saito K."/>
            <person name="Kawai Y."/>
            <person name="Isono Y."/>
            <person name="Nakamura Y."/>
            <person name="Nagahari K."/>
            <person name="Murakami K."/>
            <person name="Yasuda T."/>
            <person name="Iwayanagi T."/>
            <person name="Wagatsuma M."/>
            <person name="Shiratori A."/>
            <person name="Sudo H."/>
            <person name="Hosoiri T."/>
            <person name="Kaku Y."/>
            <person name="Kodaira H."/>
            <person name="Kondo H."/>
            <person name="Sugawara M."/>
            <person name="Takahashi M."/>
            <person name="Kanda K."/>
            <person name="Yokoi T."/>
            <person name="Furuya T."/>
            <person name="Kikkawa E."/>
            <person name="Omura Y."/>
            <person name="Abe K."/>
            <person name="Kamihara K."/>
            <person name="Katsuta N."/>
            <person name="Sato K."/>
            <person name="Tanikawa M."/>
            <person name="Yamazaki M."/>
            <person name="Ninomiya K."/>
            <person name="Ishibashi T."/>
            <person name="Yamashita H."/>
            <person name="Murakawa K."/>
            <person name="Fujimori K."/>
            <person name="Tanai H."/>
            <person name="Kimata M."/>
            <person name="Watanabe M."/>
            <person name="Hiraoka S."/>
            <person name="Chiba Y."/>
            <person name="Ishida S."/>
            <person name="Ono Y."/>
            <person name="Takiguchi S."/>
            <person name="Watanabe S."/>
            <person name="Yosida M."/>
            <person name="Hotuta T."/>
            <person name="Kusano J."/>
            <person name="Kanehori K."/>
            <person name="Takahashi-Fujii A."/>
            <person name="Hara H."/>
            <person name="Tanase T.-O."/>
            <person name="Nomura Y."/>
            <person name="Togiya S."/>
            <person name="Komai F."/>
            <person name="Hara R."/>
            <person name="Takeuchi K."/>
            <person name="Arita M."/>
            <person name="Imose N."/>
            <person name="Musashino K."/>
            <person name="Yuuki H."/>
            <person name="Oshima A."/>
            <person name="Sasaki N."/>
            <person name="Aotsuka S."/>
            <person name="Yoshikawa Y."/>
            <person name="Matsunawa H."/>
            <person name="Ichihara T."/>
            <person name="Shiohata N."/>
            <person name="Sano S."/>
            <person name="Moriya S."/>
            <person name="Momiyama H."/>
            <person name="Satoh N."/>
            <person name="Takami S."/>
            <person name="Terashima Y."/>
            <person name="Suzuki O."/>
            <person name="Nakagawa S."/>
            <person name="Senoh A."/>
            <person name="Mizoguchi H."/>
            <person name="Goto Y."/>
            <person name="Shimizu F."/>
            <person name="Wakebe H."/>
            <person name="Hishigaki H."/>
            <person name="Watanabe T."/>
            <person name="Sugiyama A."/>
            <person name="Takemoto M."/>
            <person name="Kawakami B."/>
            <person name="Yamazaki M."/>
            <person name="Watanabe K."/>
            <person name="Kumagai A."/>
            <person name="Itakura S."/>
            <person name="Fukuzumi Y."/>
            <person name="Fujimori Y."/>
            <person name="Komiyama M."/>
            <person name="Tashiro H."/>
            <person name="Tanigami A."/>
            <person name="Fujiwara T."/>
            <person name="Ono T."/>
            <person name="Yamada K."/>
            <person name="Fujii Y."/>
            <person name="Ozaki K."/>
            <person name="Hirao M."/>
            <person name="Ohmori Y."/>
            <person name="Kawabata A."/>
            <person name="Hikiji T."/>
            <person name="Kobatake N."/>
            <person name="Inagaki H."/>
            <person name="Ikema Y."/>
            <person name="Okamoto S."/>
            <person name="Okitani R."/>
            <person name="Kawakami T."/>
            <person name="Noguchi S."/>
            <person name="Itoh T."/>
            <person name="Shigeta K."/>
            <person name="Senba T."/>
            <person name="Matsumura K."/>
            <person name="Nakajima Y."/>
            <person name="Mizuno T."/>
            <person name="Morinaga M."/>
            <person name="Sasaki M."/>
            <person name="Togashi T."/>
            <person name="Oyama M."/>
            <person name="Hata H."/>
            <person name="Watanabe M."/>
            <person name="Komatsu T."/>
            <person name="Mizushima-Sugano J."/>
            <person name="Satoh T."/>
            <person name="Shirai Y."/>
            <person name="Takahashi Y."/>
            <person name="Nakagawa K."/>
            <person name="Okumura K."/>
            <person name="Nagase T."/>
            <person name="Nomura N."/>
            <person name="Kikuchi H."/>
            <person name="Masuho Y."/>
            <person name="Yamashita R."/>
            <person name="Nakai K."/>
            <person name="Yada T."/>
            <person name="Nakamura Y."/>
            <person name="Ohara O."/>
            <person name="Isogai T."/>
            <person name="Sugano S."/>
        </authorList>
    </citation>
    <scope>NUCLEOTIDE SEQUENCE [LARGE SCALE MRNA] (ISOFORMS 1; 2 AND 4)</scope>
    <source>
        <tissue>Placenta</tissue>
        <tissue>Teratocarcinoma</tissue>
    </source>
</reference>
<reference key="2">
    <citation type="submission" date="2005-09" db="EMBL/GenBank/DDBJ databases">
        <authorList>
            <person name="Mural R.J."/>
            <person name="Istrail S."/>
            <person name="Sutton G.G."/>
            <person name="Florea L."/>
            <person name="Halpern A.L."/>
            <person name="Mobarry C.M."/>
            <person name="Lippert R."/>
            <person name="Walenz B."/>
            <person name="Shatkay H."/>
            <person name="Dew I."/>
            <person name="Miller J.R."/>
            <person name="Flanigan M.J."/>
            <person name="Edwards N.J."/>
            <person name="Bolanos R."/>
            <person name="Fasulo D."/>
            <person name="Halldorsson B.V."/>
            <person name="Hannenhalli S."/>
            <person name="Turner R."/>
            <person name="Yooseph S."/>
            <person name="Lu F."/>
            <person name="Nusskern D.R."/>
            <person name="Shue B.C."/>
            <person name="Zheng X.H."/>
            <person name="Zhong F."/>
            <person name="Delcher A.L."/>
            <person name="Huson D.H."/>
            <person name="Kravitz S.A."/>
            <person name="Mouchard L."/>
            <person name="Reinert K."/>
            <person name="Remington K.A."/>
            <person name="Clark A.G."/>
            <person name="Waterman M.S."/>
            <person name="Eichler E.E."/>
            <person name="Adams M.D."/>
            <person name="Hunkapiller M.W."/>
            <person name="Myers E.W."/>
            <person name="Venter J.C."/>
        </authorList>
    </citation>
    <scope>NUCLEOTIDE SEQUENCE [LARGE SCALE GENOMIC DNA]</scope>
</reference>
<reference key="3">
    <citation type="journal article" date="2004" name="Genome Res.">
        <title>The status, quality, and expansion of the NIH full-length cDNA project: the Mammalian Gene Collection (MGC).</title>
        <authorList>
            <consortium name="The MGC Project Team"/>
        </authorList>
    </citation>
    <scope>NUCLEOTIDE SEQUENCE [LARGE SCALE MRNA] (ISOFORMS 2 AND 3)</scope>
    <source>
        <tissue>Pancreas</tissue>
    </source>
</reference>
<reference key="4">
    <citation type="journal article" date="2003" name="Nature">
        <title>Proteomic characterization of the human centrosome by protein correlation profiling.</title>
        <authorList>
            <person name="Andersen J.S."/>
            <person name="Wilkinson C.J."/>
            <person name="Mayor T."/>
            <person name="Mortensen P."/>
            <person name="Nigg E.A."/>
            <person name="Mann M."/>
        </authorList>
    </citation>
    <scope>IDENTIFICATION (ISOFORM 3)</scope>
    <scope>IDENTIFICATION BY MASS SPECTROMETRY</scope>
    <scope>SUBCELLULAR LOCATION [LARGE SCALE ANALYSIS]</scope>
    <source>
        <tissue>Lymphoblast</tissue>
    </source>
</reference>
<reference key="5">
    <citation type="journal article" date="2011" name="Cancer Res.">
        <title>Cep63 recruits Cdk1 to the centrosome: implications for regulation of mitotic entry, centrosome amplification, and genome maintenance.</title>
        <authorList>
            <person name="Loffler H."/>
            <person name="Fechter A."/>
            <person name="Matuszewska M."/>
            <person name="Saffrich R."/>
            <person name="Mistrik M."/>
            <person name="Marhold J."/>
            <person name="Hornung C."/>
            <person name="Westermann F."/>
            <person name="Bartek J."/>
            <person name="Kramer A."/>
        </authorList>
    </citation>
    <scope>FUNCTION</scope>
    <scope>INTERACTION WITH CDK1 AND CDK2</scope>
    <scope>SUBCELLULAR LOCATION</scope>
</reference>
<reference key="6">
    <citation type="journal article" date="2011" name="Nat. Genet.">
        <title>A primary microcephaly protein complex forms a ring around parental centrioles.</title>
        <authorList>
            <person name="Sir J.H."/>
            <person name="Barr A.R."/>
            <person name="Nicholas A.K."/>
            <person name="Carvalho O.P."/>
            <person name="Khurshid M."/>
            <person name="Sossick A."/>
            <person name="Reichelt S."/>
            <person name="D'Santos C."/>
            <person name="Woods C.G."/>
            <person name="Gergely F."/>
        </authorList>
    </citation>
    <scope>INVOLVEMENT IN SCKL6</scope>
    <scope>FUNCTION</scope>
    <scope>INTERACTION WITH CEP152</scope>
    <scope>SUBCELLULAR LOCATION</scope>
</reference>
<reference key="7">
    <citation type="journal article" date="2012" name="Proc. Natl. Acad. Sci. U.S.A.">
        <title>N-terminal acetylome analyses and functional insights of the N-terminal acetyltransferase NatB.</title>
        <authorList>
            <person name="Van Damme P."/>
            <person name="Lasa M."/>
            <person name="Polevoda B."/>
            <person name="Gazquez C."/>
            <person name="Elosegui-Artola A."/>
            <person name="Kim D.S."/>
            <person name="De Juan-Pardo E."/>
            <person name="Demeyer K."/>
            <person name="Hole K."/>
            <person name="Larrea E."/>
            <person name="Timmerman E."/>
            <person name="Prieto J."/>
            <person name="Arnesen T."/>
            <person name="Sherman F."/>
            <person name="Gevaert K."/>
            <person name="Aldabe R."/>
        </authorList>
    </citation>
    <scope>ACETYLATION [LARGE SCALE ANALYSIS] AT MET-1</scope>
    <scope>IDENTIFICATION BY MASS SPECTROMETRY [LARGE SCALE ANALYSIS]</scope>
</reference>
<reference key="8">
    <citation type="journal article" date="2013" name="J. Proteome Res.">
        <title>Toward a comprehensive characterization of a human cancer cell phosphoproteome.</title>
        <authorList>
            <person name="Zhou H."/>
            <person name="Di Palma S."/>
            <person name="Preisinger C."/>
            <person name="Peng M."/>
            <person name="Polat A.N."/>
            <person name="Heck A.J."/>
            <person name="Mohammed S."/>
        </authorList>
    </citation>
    <scope>PHOSPHORYLATION [LARGE SCALE ANALYSIS] AT SER-278</scope>
    <scope>IDENTIFICATION BY MASS SPECTROMETRY [LARGE SCALE ANALYSIS]</scope>
    <source>
        <tissue>Erythroleukemia</tissue>
    </source>
</reference>
<reference key="9">
    <citation type="journal article" date="2014" name="Curr. Biol.">
        <title>Proximity interactions among centrosome components identify regulators of centriole duplication.</title>
        <authorList>
            <person name="Firat-Karalar E.N."/>
            <person name="Rauniyar N."/>
            <person name="Yates J.R. III"/>
            <person name="Stearns T."/>
        </authorList>
    </citation>
    <scope>SUBCELLULAR LOCATION</scope>
    <scope>INTERACTION WITH CCDC14 AND KIAA0753</scope>
</reference>
<reference key="10">
    <citation type="journal article" date="2015" name="Elife">
        <title>Centriolar satellites assemble centrosomal microcephaly proteins to recruit CDK2 and promote centriole duplication.</title>
        <authorList>
            <person name="Kodani A."/>
            <person name="Yu T.W."/>
            <person name="Johnson J.R."/>
            <person name="Jayaraman D."/>
            <person name="Johnson T.L."/>
            <person name="Al-Gazali L."/>
            <person name="Sztriha L."/>
            <person name="Partlow J.N."/>
            <person name="Kim H."/>
            <person name="Krup A.L."/>
            <person name="Dammermann A."/>
            <person name="Krogan N."/>
            <person name="Walsh C.A."/>
            <person name="Reiter J.F."/>
        </authorList>
    </citation>
    <scope>FUNCTION</scope>
    <scope>INTERACTION WITH CDK5RAP2; CEP152; WDR62; CEP90; CCDC14 AND CDK2</scope>
    <scope>SUBCELLULAR LOCATION</scope>
</reference>
<reference key="11">
    <citation type="journal article" date="2020" name="Cell Rep.">
        <title>CCDC57 Cooperates with Microtubules and Microcephaly Protein CEP63 and Regulates Centriole Duplication and Mitotic Progression.</title>
        <authorList>
            <person name="Gurkaslar H.K."/>
            <person name="Culfa E."/>
            <person name="Arslanhan M.D."/>
            <person name="Lince-Faria M."/>
            <person name="Firat-Karalar E.N."/>
        </authorList>
    </citation>
    <scope>SUBCELLULAR LOCATION</scope>
    <scope>INTERACTION WITH CCDC57</scope>
</reference>
<reference key="12">
    <citation type="journal article" date="2022" name="Oncogene">
        <title>CEP63 upregulates YAP1 to promote colorectal cancer progression through stabilizing RNA binding protein FXR1.</title>
        <authorList>
            <person name="Ling H."/>
            <person name="Cao C.H."/>
            <person name="Han K."/>
            <person name="Lv Y.R."/>
            <person name="Ma X.D."/>
            <person name="Cao J.H."/>
            <person name="Chen J.W."/>
            <person name="Li S."/>
            <person name="Lin J.L."/>
            <person name="Fang Y.J."/>
            <person name="Pan Z.Z."/>
            <person name="Xie D."/>
            <person name="Wang F.W."/>
        </authorList>
    </citation>
    <scope>FUNCTION</scope>
    <scope>UBIQUITINATION</scope>
    <scope>DEUBIQUITINATION</scope>
    <scope>INTERACTION WITH FXR1</scope>
</reference>
<reference key="13">
    <citation type="journal article" date="2022" name="EMBO Rep.">
        <title>Zika virus alters centrosome organization to suppress the innate immune response.</title>
        <authorList>
            <person name="Kodani A."/>
            <person name="Knopp K.A."/>
            <person name="Di Lullo E."/>
            <person name="Retallack H."/>
            <person name="Kriegstein A.R."/>
            <person name="DeRisi J.L."/>
            <person name="Reiter J.F."/>
        </authorList>
    </citation>
    <scope>INTERACTION WITH ZIKA VIRUS SERINE PROTEASE NS3 (MICROBIAL INFECTION)</scope>
    <scope>FUNCTION</scope>
    <scope>SUBCELLULAR LOCATION</scope>
</reference>
<gene>
    <name evidence="13" type="primary">CEP63</name>
</gene>
<sequence length="703" mass="81344">MEALLEGIQNRGHGGGFLTSCEAELQELMKQIDIMVAHKKSEWEGRTHALETCLKIREQELKSLRSQLDVTHKEVGMLHQQVEEHEKIKQEMTMEYKQELKKLHEELCILKRSYEKLQKKQMREFRGNTKNHREDRSEIERLTAKIEEFRQKSLDWEKQRLIYQQQVSSLEAQRKALAEQSEIIQAQLVNRKQKLESVELSSQSEIQHLSSKLERANDTICANELEIERLTMRVNDLVGTSMTVLQEQQQKEEKLRESEKLLEALQEEKRELKAALQSQENLIHEARIQKEKLQEKVKATNTQHAVEAIRPREESLAEKKYTSQGQGDLDSVLSQLNFTHTSEDLLQAEVTCLEGSLESVSATCKQLSQELMEKYEELKRMEAHNNEYKAEIKKLKEQILQGEQSYSSALEGMKMEISHLTQELHQRDITIASTKGSSSDMEKRLRAEMQKAEDKAVEHKEILDQLESLKLENRHLSEMVMKLELGLHEAKEISLADLQENYIEALNKLVSENQQLQKDLMNTKSQLEISTQMCKKQNDRIFKPTHSRTTEFKNTEFKPTHGQHRHDGIKTEHYKTDLHSPRGQASDSINPMSRVLSPLSPQISPCSSTRSLTSYSLCKTHSLPSALDTNEANFSDTMSESMNDQEEFISSCSLPVSPLGSIATRFLEEEELRSHHILERLDAHIEELKRESEKTVRQFTALK</sequence>
<evidence type="ECO:0000255" key="1"/>
<evidence type="ECO:0000269" key="2">
    <source>
    </source>
</evidence>
<evidence type="ECO:0000269" key="3">
    <source>
    </source>
</evidence>
<evidence type="ECO:0000269" key="4">
    <source>
    </source>
</evidence>
<evidence type="ECO:0000269" key="5">
    <source>
    </source>
</evidence>
<evidence type="ECO:0000269" key="6">
    <source>
    </source>
</evidence>
<evidence type="ECO:0000269" key="7">
    <source>
    </source>
</evidence>
<evidence type="ECO:0000269" key="8">
    <source>
    </source>
</evidence>
<evidence type="ECO:0000269" key="9">
    <source>
    </source>
</evidence>
<evidence type="ECO:0000303" key="10">
    <source>
    </source>
</evidence>
<evidence type="ECO:0000303" key="11">
    <source>
    </source>
</evidence>
<evidence type="ECO:0000305" key="12"/>
<evidence type="ECO:0000312" key="13">
    <source>
        <dbReference type="HGNC" id="HGNC:25815"/>
    </source>
</evidence>
<evidence type="ECO:0007744" key="14">
    <source>
    </source>
</evidence>
<evidence type="ECO:0007744" key="15">
    <source>
    </source>
</evidence>
<evidence type="ECO:0007829" key="16">
    <source>
        <dbReference type="PDB" id="6CSU"/>
    </source>
</evidence>
<evidence type="ECO:0007829" key="17">
    <source>
        <dbReference type="PDB" id="7W91"/>
    </source>
</evidence>
<name>CEP63_HUMAN</name>
<accession>Q96MT8</accession>
<accession>D3DND8</accession>
<accession>D3DND9</accession>
<accession>D3DNE0</accession>
<accession>Q96CR0</accession>
<accession>Q9H8F5</accession>
<accession>Q9H8N0</accession>
<proteinExistence type="evidence at protein level"/>
<dbReference type="EMBL" id="AK023448">
    <property type="protein sequence ID" value="BAB14578.1"/>
    <property type="molecule type" value="mRNA"/>
</dbReference>
<dbReference type="EMBL" id="AK023738">
    <property type="protein sequence ID" value="BAB14662.1"/>
    <property type="molecule type" value="mRNA"/>
</dbReference>
<dbReference type="EMBL" id="AK056465">
    <property type="protein sequence ID" value="BAB71192.1"/>
    <property type="molecule type" value="mRNA"/>
</dbReference>
<dbReference type="EMBL" id="CH471052">
    <property type="protein sequence ID" value="EAW79136.1"/>
    <property type="molecule type" value="Genomic_DNA"/>
</dbReference>
<dbReference type="EMBL" id="CH471052">
    <property type="protein sequence ID" value="EAW79137.1"/>
    <property type="molecule type" value="Genomic_DNA"/>
</dbReference>
<dbReference type="EMBL" id="CH471052">
    <property type="protein sequence ID" value="EAW79138.1"/>
    <property type="molecule type" value="Genomic_DNA"/>
</dbReference>
<dbReference type="EMBL" id="CH471052">
    <property type="protein sequence ID" value="EAW79139.1"/>
    <property type="molecule type" value="Genomic_DNA"/>
</dbReference>
<dbReference type="EMBL" id="CH471052">
    <property type="protein sequence ID" value="EAW79140.1"/>
    <property type="molecule type" value="Genomic_DNA"/>
</dbReference>
<dbReference type="EMBL" id="CH471052">
    <property type="protein sequence ID" value="EAW79141.1"/>
    <property type="molecule type" value="Genomic_DNA"/>
</dbReference>
<dbReference type="EMBL" id="BC014050">
    <property type="protein sequence ID" value="AAH14050.1"/>
    <property type="molecule type" value="mRNA"/>
</dbReference>
<dbReference type="EMBL" id="BC068997">
    <property type="protein sequence ID" value="AAH68997.1"/>
    <property type="molecule type" value="mRNA"/>
</dbReference>
<dbReference type="EMBL" id="BK005503">
    <property type="protein sequence ID" value="DAA05503.1"/>
    <property type="molecule type" value="mRNA"/>
</dbReference>
<dbReference type="CCDS" id="CCDS3086.1">
    <molecule id="Q96MT8-1"/>
</dbReference>
<dbReference type="CCDS" id="CCDS43152.1">
    <molecule id="Q96MT8-4"/>
</dbReference>
<dbReference type="CCDS" id="CCDS43153.1">
    <molecule id="Q96MT8-2"/>
</dbReference>
<dbReference type="CCDS" id="CCDS43154.1">
    <molecule id="Q96MT8-3"/>
</dbReference>
<dbReference type="RefSeq" id="NP_001035842.1">
    <molecule id="Q96MT8-3"/>
    <property type="nucleotide sequence ID" value="NM_001042383.2"/>
</dbReference>
<dbReference type="RefSeq" id="NP_001035843.1">
    <molecule id="Q96MT8-4"/>
    <property type="nucleotide sequence ID" value="NM_001042384.2"/>
</dbReference>
<dbReference type="RefSeq" id="NP_001035859.1">
    <molecule id="Q96MT8-2"/>
    <property type="nucleotide sequence ID" value="NM_001042400.3"/>
</dbReference>
<dbReference type="RefSeq" id="NP_001340037.1">
    <molecule id="Q96MT8-1"/>
    <property type="nucleotide sequence ID" value="NM_001353108.3"/>
</dbReference>
<dbReference type="RefSeq" id="NP_001340039.1">
    <molecule id="Q96MT8-2"/>
    <property type="nucleotide sequence ID" value="NM_001353110.1"/>
</dbReference>
<dbReference type="RefSeq" id="NP_001340040.1">
    <molecule id="Q96MT8-2"/>
    <property type="nucleotide sequence ID" value="NM_001353111.2"/>
</dbReference>
<dbReference type="RefSeq" id="NP_001340041.1">
    <molecule id="Q96MT8-2"/>
    <property type="nucleotide sequence ID" value="NM_001353112.2"/>
</dbReference>
<dbReference type="RefSeq" id="NP_001340048.1">
    <molecule id="Q96MT8-3"/>
    <property type="nucleotide sequence ID" value="NM_001353119.2"/>
</dbReference>
<dbReference type="RefSeq" id="NP_001340049.1">
    <molecule id="Q96MT8-3"/>
    <property type="nucleotide sequence ID" value="NM_001353120.2"/>
</dbReference>
<dbReference type="RefSeq" id="NP_001340050.1">
    <molecule id="Q96MT8-3"/>
    <property type="nucleotide sequence ID" value="NM_001353121.2"/>
</dbReference>
<dbReference type="RefSeq" id="NP_001340051.1">
    <molecule id="Q96MT8-3"/>
    <property type="nucleotide sequence ID" value="NM_001353122.1"/>
</dbReference>
<dbReference type="RefSeq" id="NP_001340052.1">
    <molecule id="Q96MT8-4"/>
    <property type="nucleotide sequence ID" value="NM_001353123.2"/>
</dbReference>
<dbReference type="RefSeq" id="NP_001340053.1">
    <molecule id="Q96MT8-4"/>
    <property type="nucleotide sequence ID" value="NM_001353124.2"/>
</dbReference>
<dbReference type="RefSeq" id="NP_079456.2">
    <molecule id="Q96MT8-1"/>
    <property type="nucleotide sequence ID" value="NM_025180.3"/>
</dbReference>
<dbReference type="RefSeq" id="XP_005247854.1">
    <molecule id="Q96MT8-1"/>
    <property type="nucleotide sequence ID" value="XM_005247797.4"/>
</dbReference>
<dbReference type="RefSeq" id="XP_006713823.1">
    <molecule id="Q96MT8-1"/>
    <property type="nucleotide sequence ID" value="XM_006713760.5"/>
</dbReference>
<dbReference type="RefSeq" id="XP_011511496.1">
    <property type="nucleotide sequence ID" value="XM_011513194.2"/>
</dbReference>
<dbReference type="RefSeq" id="XP_016862743.1">
    <property type="nucleotide sequence ID" value="XM_017007254.1"/>
</dbReference>
<dbReference type="RefSeq" id="XP_016862744.1">
    <property type="nucleotide sequence ID" value="XM_017007255.1"/>
</dbReference>
<dbReference type="RefSeq" id="XP_016862745.1">
    <property type="nucleotide sequence ID" value="XM_017007256.1"/>
</dbReference>
<dbReference type="RefSeq" id="XP_016862751.1">
    <property type="nucleotide sequence ID" value="XM_017007262.1"/>
</dbReference>
<dbReference type="RefSeq" id="XP_016862752.1">
    <property type="nucleotide sequence ID" value="XM_017007263.1"/>
</dbReference>
<dbReference type="RefSeq" id="XP_016862753.1">
    <property type="nucleotide sequence ID" value="XM_017007264.1"/>
</dbReference>
<dbReference type="RefSeq" id="XP_016862755.1">
    <property type="nucleotide sequence ID" value="XM_017007266.1"/>
</dbReference>
<dbReference type="RefSeq" id="XP_016862756.1">
    <property type="nucleotide sequence ID" value="XM_017007267.1"/>
</dbReference>
<dbReference type="RefSeq" id="XP_047304952.1">
    <molecule id="Q96MT8-1"/>
    <property type="nucleotide sequence ID" value="XM_047448996.1"/>
</dbReference>
<dbReference type="PDB" id="6CSU">
    <property type="method" value="X-ray"/>
    <property type="resolution" value="2.50 A"/>
    <property type="chains" value="A/C=664-703"/>
</dbReference>
<dbReference type="PDB" id="6CSV">
    <property type="method" value="X-ray"/>
    <property type="resolution" value="2.50 A"/>
    <property type="chains" value="A/B/C/D=664-703"/>
</dbReference>
<dbReference type="PDB" id="7W91">
    <property type="method" value="X-ray"/>
    <property type="resolution" value="3.29 A"/>
    <property type="chains" value="A/B/C/D/E/F/G/H/I/J/K/L=440-490"/>
</dbReference>
<dbReference type="PDBsum" id="6CSU"/>
<dbReference type="PDBsum" id="6CSV"/>
<dbReference type="PDBsum" id="7W91"/>
<dbReference type="SMR" id="Q96MT8"/>
<dbReference type="BioGRID" id="123200">
    <property type="interactions" value="192"/>
</dbReference>
<dbReference type="DIP" id="DIP-36374N"/>
<dbReference type="FunCoup" id="Q96MT8">
    <property type="interactions" value="1196"/>
</dbReference>
<dbReference type="IntAct" id="Q96MT8">
    <property type="interactions" value="522"/>
</dbReference>
<dbReference type="MINT" id="Q96MT8"/>
<dbReference type="STRING" id="9606.ENSP00000336524"/>
<dbReference type="iPTMnet" id="Q96MT8"/>
<dbReference type="PhosphoSitePlus" id="Q96MT8"/>
<dbReference type="BioMuta" id="CEP63"/>
<dbReference type="DMDM" id="56748851"/>
<dbReference type="jPOST" id="Q96MT8"/>
<dbReference type="MassIVE" id="Q96MT8"/>
<dbReference type="PaxDb" id="9606-ENSP00000336524"/>
<dbReference type="PeptideAtlas" id="Q96MT8"/>
<dbReference type="ProteomicsDB" id="77406">
    <molecule id="Q96MT8-1"/>
</dbReference>
<dbReference type="ProteomicsDB" id="77407">
    <molecule id="Q96MT8-2"/>
</dbReference>
<dbReference type="ProteomicsDB" id="77408">
    <molecule id="Q96MT8-3"/>
</dbReference>
<dbReference type="ProteomicsDB" id="77409">
    <molecule id="Q96MT8-4"/>
</dbReference>
<dbReference type="Pumba" id="Q96MT8"/>
<dbReference type="Antibodypedia" id="46695">
    <property type="antibodies" value="216 antibodies from 25 providers"/>
</dbReference>
<dbReference type="DNASU" id="80254"/>
<dbReference type="Ensembl" id="ENST00000332047.10">
    <molecule id="Q96MT8-3"/>
    <property type="protein sequence ID" value="ENSP00000328382.5"/>
    <property type="gene ID" value="ENSG00000182923.20"/>
</dbReference>
<dbReference type="Ensembl" id="ENST00000354446.7">
    <molecule id="Q96MT8-4"/>
    <property type="protein sequence ID" value="ENSP00000346432.3"/>
    <property type="gene ID" value="ENSG00000182923.20"/>
</dbReference>
<dbReference type="Ensembl" id="ENST00000383229.8">
    <molecule id="Q96MT8-2"/>
    <property type="protein sequence ID" value="ENSP00000372716.3"/>
    <property type="gene ID" value="ENSG00000182923.20"/>
</dbReference>
<dbReference type="Ensembl" id="ENST00000512894.6">
    <molecule id="Q96MT8-4"/>
    <property type="protein sequence ID" value="ENSP00000423225.2"/>
    <property type="gene ID" value="ENSG00000182923.20"/>
</dbReference>
<dbReference type="Ensembl" id="ENST00000513612.7">
    <molecule id="Q96MT8-1"/>
    <property type="protein sequence ID" value="ENSP00000426129.1"/>
    <property type="gene ID" value="ENSG00000182923.20"/>
</dbReference>
<dbReference type="Ensembl" id="ENST00000606977.5">
    <molecule id="Q96MT8-1"/>
    <property type="protein sequence ID" value="ENSP00000475903.1"/>
    <property type="gene ID" value="ENSG00000182923.20"/>
</dbReference>
<dbReference type="Ensembl" id="ENST00000620544.5">
    <molecule id="Q96MT8-4"/>
    <property type="protein sequence ID" value="ENSP00000482219.1"/>
    <property type="gene ID" value="ENSG00000182923.20"/>
</dbReference>
<dbReference type="Ensembl" id="ENST00000675561.1">
    <molecule id="Q96MT8-1"/>
    <property type="protein sequence ID" value="ENSP00000502085.1"/>
    <property type="gene ID" value="ENSG00000182923.20"/>
</dbReference>
<dbReference type="Ensembl" id="ENST00000682042.1">
    <molecule id="Q96MT8-3"/>
    <property type="protein sequence ID" value="ENSP00000507228.1"/>
    <property type="gene ID" value="ENSG00000182923.20"/>
</dbReference>
<dbReference type="Ensembl" id="ENST00000682800.1">
    <molecule id="Q96MT8-3"/>
    <property type="protein sequence ID" value="ENSP00000506791.1"/>
    <property type="gene ID" value="ENSG00000182923.20"/>
</dbReference>
<dbReference type="Ensembl" id="ENST00000682858.1">
    <molecule id="Q96MT8-3"/>
    <property type="protein sequence ID" value="ENSP00000507703.1"/>
    <property type="gene ID" value="ENSG00000182923.20"/>
</dbReference>
<dbReference type="Ensembl" id="ENST00000683177.1">
    <molecule id="Q96MT8-3"/>
    <property type="protein sequence ID" value="ENSP00000506828.1"/>
    <property type="gene ID" value="ENSG00000182923.20"/>
</dbReference>
<dbReference type="Ensembl" id="ENST00000683596.1">
    <molecule id="Q96MT8-1"/>
    <property type="protein sequence ID" value="ENSP00000506896.1"/>
    <property type="gene ID" value="ENSG00000182923.20"/>
</dbReference>
<dbReference type="Ensembl" id="ENST00000683608.1">
    <molecule id="Q96MT8-2"/>
    <property type="protein sequence ID" value="ENSP00000507704.1"/>
    <property type="gene ID" value="ENSG00000182923.20"/>
</dbReference>
<dbReference type="Ensembl" id="ENST00000683861.1">
    <molecule id="Q96MT8-3"/>
    <property type="protein sequence ID" value="ENSP00000506728.1"/>
    <property type="gene ID" value="ENSG00000182923.20"/>
</dbReference>
<dbReference type="Ensembl" id="ENST00000684217.1">
    <molecule id="Q96MT8-2"/>
    <property type="protein sequence ID" value="ENSP00000508291.1"/>
    <property type="gene ID" value="ENSG00000182923.20"/>
</dbReference>
<dbReference type="Ensembl" id="ENST00000684677.1">
    <molecule id="Q96MT8-2"/>
    <property type="protein sequence ID" value="ENSP00000507217.1"/>
    <property type="gene ID" value="ENSG00000182923.20"/>
</dbReference>
<dbReference type="GeneID" id="80254"/>
<dbReference type="KEGG" id="hsa:80254"/>
<dbReference type="MANE-Select" id="ENST00000675561.1">
    <property type="protein sequence ID" value="ENSP00000502085.1"/>
    <property type="RefSeq nucleotide sequence ID" value="NM_001353108.3"/>
    <property type="RefSeq protein sequence ID" value="NP_001340037.1"/>
</dbReference>
<dbReference type="UCSC" id="uc003eql.2">
    <molecule id="Q96MT8-1"/>
    <property type="organism name" value="human"/>
</dbReference>
<dbReference type="AGR" id="HGNC:25815"/>
<dbReference type="CTD" id="80254"/>
<dbReference type="DisGeNET" id="80254"/>
<dbReference type="GeneCards" id="CEP63"/>
<dbReference type="HGNC" id="HGNC:25815">
    <property type="gene designation" value="CEP63"/>
</dbReference>
<dbReference type="HPA" id="ENSG00000182923">
    <property type="expression patterns" value="Low tissue specificity"/>
</dbReference>
<dbReference type="MalaCards" id="CEP63"/>
<dbReference type="MIM" id="614724">
    <property type="type" value="gene"/>
</dbReference>
<dbReference type="MIM" id="614728">
    <property type="type" value="phenotype"/>
</dbReference>
<dbReference type="neXtProt" id="NX_Q96MT8"/>
<dbReference type="OpenTargets" id="ENSG00000182923"/>
<dbReference type="Orphanet" id="2512">
    <property type="disease" value="Autosomal recessive primary microcephaly"/>
</dbReference>
<dbReference type="PharmGKB" id="PA142672124"/>
<dbReference type="VEuPathDB" id="HostDB:ENSG00000182923"/>
<dbReference type="eggNOG" id="ENOG502QRYU">
    <property type="taxonomic scope" value="Eukaryota"/>
</dbReference>
<dbReference type="GeneTree" id="ENSGT00940000153190"/>
<dbReference type="HOGENOM" id="CLU_027471_1_0_1"/>
<dbReference type="InParanoid" id="Q96MT8"/>
<dbReference type="OMA" id="HYKAGLH"/>
<dbReference type="OrthoDB" id="10007333at2759"/>
<dbReference type="PAN-GO" id="Q96MT8">
    <property type="GO annotations" value="3 GO annotations based on evolutionary models"/>
</dbReference>
<dbReference type="PhylomeDB" id="Q96MT8"/>
<dbReference type="TreeFam" id="TF330595"/>
<dbReference type="PathwayCommons" id="Q96MT8"/>
<dbReference type="Reactome" id="R-HSA-2565942">
    <property type="pathway name" value="Regulation of PLK1 Activity at G2/M Transition"/>
</dbReference>
<dbReference type="Reactome" id="R-HSA-380259">
    <property type="pathway name" value="Loss of Nlp from mitotic centrosomes"/>
</dbReference>
<dbReference type="Reactome" id="R-HSA-380270">
    <property type="pathway name" value="Recruitment of mitotic centrosome proteins and complexes"/>
</dbReference>
<dbReference type="Reactome" id="R-HSA-380284">
    <property type="pathway name" value="Loss of proteins required for interphase microtubule organization from the centrosome"/>
</dbReference>
<dbReference type="Reactome" id="R-HSA-380320">
    <property type="pathway name" value="Recruitment of NuMA to mitotic centrosomes"/>
</dbReference>
<dbReference type="Reactome" id="R-HSA-5620912">
    <property type="pathway name" value="Anchoring of the basal body to the plasma membrane"/>
</dbReference>
<dbReference type="Reactome" id="R-HSA-8854518">
    <property type="pathway name" value="AURKA Activation by TPX2"/>
</dbReference>
<dbReference type="SignaLink" id="Q96MT8"/>
<dbReference type="SIGNOR" id="Q96MT8"/>
<dbReference type="BioGRID-ORCS" id="80254">
    <property type="hits" value="22 hits in 1165 CRISPR screens"/>
</dbReference>
<dbReference type="CD-CODE" id="1DAEF59B">
    <property type="entry name" value="Pericentriolar matrix"/>
</dbReference>
<dbReference type="CD-CODE" id="8C2F96ED">
    <property type="entry name" value="Centrosome"/>
</dbReference>
<dbReference type="ChiTaRS" id="CEP63">
    <property type="organism name" value="human"/>
</dbReference>
<dbReference type="GeneWiki" id="CEP63"/>
<dbReference type="GenomeRNAi" id="80254"/>
<dbReference type="Pharos" id="Q96MT8">
    <property type="development level" value="Tbio"/>
</dbReference>
<dbReference type="PRO" id="PR:Q96MT8"/>
<dbReference type="Proteomes" id="UP000005640">
    <property type="component" value="Chromosome 3"/>
</dbReference>
<dbReference type="RNAct" id="Q96MT8">
    <property type="molecule type" value="protein"/>
</dbReference>
<dbReference type="Bgee" id="ENSG00000182923">
    <property type="expression patterns" value="Expressed in calcaneal tendon and 204 other cell types or tissues"/>
</dbReference>
<dbReference type="ExpressionAtlas" id="Q96MT8">
    <property type="expression patterns" value="baseline and differential"/>
</dbReference>
<dbReference type="GO" id="GO:0034451">
    <property type="term" value="C:centriolar satellite"/>
    <property type="evidence" value="ECO:0007669"/>
    <property type="project" value="UniProtKB-SubCell"/>
</dbReference>
<dbReference type="GO" id="GO:0005814">
    <property type="term" value="C:centriole"/>
    <property type="evidence" value="ECO:0000250"/>
    <property type="project" value="UniProtKB"/>
</dbReference>
<dbReference type="GO" id="GO:0005813">
    <property type="term" value="C:centrosome"/>
    <property type="evidence" value="ECO:0000314"/>
    <property type="project" value="HPA"/>
</dbReference>
<dbReference type="GO" id="GO:0036064">
    <property type="term" value="C:ciliary basal body"/>
    <property type="evidence" value="ECO:0000314"/>
    <property type="project" value="HPA"/>
</dbReference>
<dbReference type="GO" id="GO:0005829">
    <property type="term" value="C:cytosol"/>
    <property type="evidence" value="ECO:0000314"/>
    <property type="project" value="HPA"/>
</dbReference>
<dbReference type="GO" id="GO:0005654">
    <property type="term" value="C:nucleoplasm"/>
    <property type="evidence" value="ECO:0000314"/>
    <property type="project" value="HPA"/>
</dbReference>
<dbReference type="GO" id="GO:0000922">
    <property type="term" value="C:spindle pole"/>
    <property type="evidence" value="ECO:0000250"/>
    <property type="project" value="UniProtKB"/>
</dbReference>
<dbReference type="GO" id="GO:0060090">
    <property type="term" value="F:molecular adaptor activity"/>
    <property type="evidence" value="ECO:0000314"/>
    <property type="project" value="UniProt"/>
</dbReference>
<dbReference type="GO" id="GO:0051301">
    <property type="term" value="P:cell division"/>
    <property type="evidence" value="ECO:0007669"/>
    <property type="project" value="UniProtKB-KW"/>
</dbReference>
<dbReference type="GO" id="GO:0007099">
    <property type="term" value="P:centriole replication"/>
    <property type="evidence" value="ECO:0000315"/>
    <property type="project" value="UniProtKB"/>
</dbReference>
<dbReference type="GO" id="GO:0098535">
    <property type="term" value="P:de novo centriole assembly involved in multi-ciliated epithelial cell differentiation"/>
    <property type="evidence" value="ECO:0000318"/>
    <property type="project" value="GO_Central"/>
</dbReference>
<dbReference type="GO" id="GO:0000077">
    <property type="term" value="P:DNA damage checkpoint signaling"/>
    <property type="evidence" value="ECO:0000250"/>
    <property type="project" value="UniProtKB"/>
</dbReference>
<dbReference type="GO" id="GO:0045824">
    <property type="term" value="P:negative regulation of innate immune response"/>
    <property type="evidence" value="ECO:0000314"/>
    <property type="project" value="UniProt"/>
</dbReference>
<dbReference type="GO" id="GO:1900045">
    <property type="term" value="P:negative regulation of protein K63-linked ubiquitination"/>
    <property type="evidence" value="ECO:0000314"/>
    <property type="project" value="UniProtKB"/>
</dbReference>
<dbReference type="GO" id="GO:0050821">
    <property type="term" value="P:protein stabilization"/>
    <property type="evidence" value="ECO:0000314"/>
    <property type="project" value="UniProtKB"/>
</dbReference>
<dbReference type="GO" id="GO:0042770">
    <property type="term" value="P:signal transduction in response to DNA damage"/>
    <property type="evidence" value="ECO:0000250"/>
    <property type="project" value="UniProtKB"/>
</dbReference>
<dbReference type="GO" id="GO:0051225">
    <property type="term" value="P:spindle assembly"/>
    <property type="evidence" value="ECO:0000250"/>
    <property type="project" value="UniProtKB"/>
</dbReference>
<dbReference type="InterPro" id="IPR031470">
    <property type="entry name" value="Cep63/Deup1_N"/>
</dbReference>
<dbReference type="PANTHER" id="PTHR18875:SF7">
    <property type="entry name" value="CENTROSOMAL PROTEIN OF 63 KDA"/>
    <property type="match status" value="1"/>
</dbReference>
<dbReference type="PANTHER" id="PTHR18875">
    <property type="entry name" value="SARCOMA ANTIGEN NY-SAR-24/CYTOSKELETAL PROTEIN SOJO"/>
    <property type="match status" value="1"/>
</dbReference>
<dbReference type="Pfam" id="PF17045">
    <property type="entry name" value="CEP63"/>
    <property type="match status" value="1"/>
</dbReference>